<keyword id="KW-0227">DNA damage</keyword>
<keyword id="KW-0233">DNA recombination</keyword>
<keyword id="KW-0234">DNA repair</keyword>
<keyword id="KW-0255">Endonuclease</keyword>
<keyword id="KW-0378">Hydrolase</keyword>
<keyword id="KW-0460">Magnesium</keyword>
<keyword id="KW-0464">Manganese</keyword>
<keyword id="KW-0469">Meiosis</keyword>
<keyword id="KW-0479">Metal-binding</keyword>
<keyword id="KW-0540">Nuclease</keyword>
<keyword id="KW-0539">Nucleus</keyword>
<keyword id="KW-1185">Reference proteome</keyword>
<protein>
    <recommendedName>
        <fullName>Crossover junction endonuclease MUS81</fullName>
        <ecNumber>3.1.22.-</ecNumber>
    </recommendedName>
</protein>
<gene>
    <name type="primary">MUS81</name>
    <name type="ordered locus">CAGL0A03256g</name>
</gene>
<name>MUS81_CANGA</name>
<organism>
    <name type="scientific">Candida glabrata (strain ATCC 2001 / BCRC 20586 / JCM 3761 / NBRC 0622 / NRRL Y-65 / CBS 138)</name>
    <name type="common">Yeast</name>
    <name type="synonym">Nakaseomyces glabratus</name>
    <dbReference type="NCBI Taxonomy" id="284593"/>
    <lineage>
        <taxon>Eukaryota</taxon>
        <taxon>Fungi</taxon>
        <taxon>Dikarya</taxon>
        <taxon>Ascomycota</taxon>
        <taxon>Saccharomycotina</taxon>
        <taxon>Saccharomycetes</taxon>
        <taxon>Saccharomycetales</taxon>
        <taxon>Saccharomycetaceae</taxon>
        <taxon>Nakaseomyces</taxon>
    </lineage>
</organism>
<proteinExistence type="inferred from homology"/>
<reference key="1">
    <citation type="journal article" date="2004" name="Nature">
        <title>Genome evolution in yeasts.</title>
        <authorList>
            <person name="Dujon B."/>
            <person name="Sherman D."/>
            <person name="Fischer G."/>
            <person name="Durrens P."/>
            <person name="Casaregola S."/>
            <person name="Lafontaine I."/>
            <person name="de Montigny J."/>
            <person name="Marck C."/>
            <person name="Neuveglise C."/>
            <person name="Talla E."/>
            <person name="Goffard N."/>
            <person name="Frangeul L."/>
            <person name="Aigle M."/>
            <person name="Anthouard V."/>
            <person name="Babour A."/>
            <person name="Barbe V."/>
            <person name="Barnay S."/>
            <person name="Blanchin S."/>
            <person name="Beckerich J.-M."/>
            <person name="Beyne E."/>
            <person name="Bleykasten C."/>
            <person name="Boisrame A."/>
            <person name="Boyer J."/>
            <person name="Cattolico L."/>
            <person name="Confanioleri F."/>
            <person name="de Daruvar A."/>
            <person name="Despons L."/>
            <person name="Fabre E."/>
            <person name="Fairhead C."/>
            <person name="Ferry-Dumazet H."/>
            <person name="Groppi A."/>
            <person name="Hantraye F."/>
            <person name="Hennequin C."/>
            <person name="Jauniaux N."/>
            <person name="Joyet P."/>
            <person name="Kachouri R."/>
            <person name="Kerrest A."/>
            <person name="Koszul R."/>
            <person name="Lemaire M."/>
            <person name="Lesur I."/>
            <person name="Ma L."/>
            <person name="Muller H."/>
            <person name="Nicaud J.-M."/>
            <person name="Nikolski M."/>
            <person name="Oztas S."/>
            <person name="Ozier-Kalogeropoulos O."/>
            <person name="Pellenz S."/>
            <person name="Potier S."/>
            <person name="Richard G.-F."/>
            <person name="Straub M.-L."/>
            <person name="Suleau A."/>
            <person name="Swennen D."/>
            <person name="Tekaia F."/>
            <person name="Wesolowski-Louvel M."/>
            <person name="Westhof E."/>
            <person name="Wirth B."/>
            <person name="Zeniou-Meyer M."/>
            <person name="Zivanovic Y."/>
            <person name="Bolotin-Fukuhara M."/>
            <person name="Thierry A."/>
            <person name="Bouchier C."/>
            <person name="Caudron B."/>
            <person name="Scarpelli C."/>
            <person name="Gaillardin C."/>
            <person name="Weissenbach J."/>
            <person name="Wincker P."/>
            <person name="Souciet J.-L."/>
        </authorList>
    </citation>
    <scope>NUCLEOTIDE SEQUENCE [LARGE SCALE GENOMIC DNA]</scope>
    <source>
        <strain>ATCC 2001 / BCRC 20586 / JCM 3761 / NBRC 0622 / NRRL Y-65 / CBS 138</strain>
    </source>
</reference>
<comment type="function">
    <text evidence="1">Interacts with EME1 to form a DNA structure-specific endonuclease with substrate preference for branched DNA structures with a 5'-end at the branch nick. Typical substrates include 3'-flap structures, D-loops, replication forks and nicked Holliday junctions. May be required in mitosis for the processing of stalled or collapsed replication fork intermediates. May be required in meiosis for the repair of meiosis-specific double strand breaks subsequent to single-end invasion (SEI) (By similarity).</text>
</comment>
<comment type="cofactor">
    <cofactor evidence="1">
        <name>Mg(2+)</name>
        <dbReference type="ChEBI" id="CHEBI:18420"/>
    </cofactor>
</comment>
<comment type="subunit">
    <text evidence="1">Interacts with EME1.</text>
</comment>
<comment type="subcellular location">
    <subcellularLocation>
        <location evidence="1">Nucleus</location>
    </subcellularLocation>
</comment>
<comment type="similarity">
    <text evidence="3">Belongs to the XPF family.</text>
</comment>
<feature type="chain" id="PRO_0000223703" description="Crossover junction endonuclease MUS81">
    <location>
        <begin position="1"/>
        <end position="628"/>
    </location>
</feature>
<feature type="domain" description="ERCC4">
    <location>
        <begin position="348"/>
        <end position="445"/>
    </location>
</feature>
<feature type="region of interest" description="Disordered" evidence="2">
    <location>
        <begin position="298"/>
        <end position="318"/>
    </location>
</feature>
<feature type="compositionally biased region" description="Polar residues" evidence="2">
    <location>
        <begin position="298"/>
        <end position="310"/>
    </location>
</feature>
<evidence type="ECO:0000250" key="1"/>
<evidence type="ECO:0000256" key="2">
    <source>
        <dbReference type="SAM" id="MobiDB-lite"/>
    </source>
</evidence>
<evidence type="ECO:0000305" key="3"/>
<sequence length="628" mass="72027">MLPDNLKDLYVQWLQELIDSLSEKQEQLINTYSKAKKNLIDHDGVFYYPKDLLKVKGIGATIAKRLEARLVKHCEEIGVDVPRKQLPIDNGTQGSKSLKRVRTQLRIDGINTNDTDINKPVRKKRKYIPKKRSGAYAILLALLELGAQNKGVIKPDIIEAAQKYTDHSMTPNYTTKEFYSAWSSIAQLKKHELVLIEGRPQQYTLTEEGLQLADTLRLADGIDIDGKSIASSMDTNNAYYSDEHTADFSALKHDLSGLTCAPIKDGTNSSGNYSILEKTFGSQDFNVRHHEIGMVQRSHTFGNGDSNNSIEPLPRDTSEFTTQPSLIQRRRFESVSYELWQPGTYEIYPVIDHREVRSHSDREFFFNAFKARDMKSEIRQLSLGDIIWVAKNKTTGQQCILNTIIERKRLDDLAMSIRDNRFMEQKNRLEKSGCKHKYYLIEETIGSSIGNMADALKTTLWIILVYYRFSMIRTVNAEDSVDKLHALHTVICESYKHKALVVLYPTDLKSQDHYRGILSIFQNEFERSGNLECCHTFDTFQDIMGKRELKTIKEITIHILMLVRGVSLEKAVFIQRHFPTLNHLLNAYRKCNSQMEAKLMMFQKFGNAPGAKKITKQLSEKLAETFAF</sequence>
<dbReference type="EC" id="3.1.22.-"/>
<dbReference type="EMBL" id="CR380947">
    <property type="protein sequence ID" value="CAG57802.1"/>
    <property type="molecule type" value="Genomic_DNA"/>
</dbReference>
<dbReference type="RefSeq" id="XP_444909.1">
    <property type="nucleotide sequence ID" value="XM_444909.1"/>
</dbReference>
<dbReference type="SMR" id="Q6FYA6"/>
<dbReference type="FunCoup" id="Q6FYA6">
    <property type="interactions" value="228"/>
</dbReference>
<dbReference type="STRING" id="284593.Q6FYA6"/>
<dbReference type="EnsemblFungi" id="CAGL0A03256g-T">
    <property type="protein sequence ID" value="CAGL0A03256g-T-p1"/>
    <property type="gene ID" value="CAGL0A03256g"/>
</dbReference>
<dbReference type="KEGG" id="cgr:2886325"/>
<dbReference type="CGD" id="CAL0126939">
    <property type="gene designation" value="CAGL0A03256g"/>
</dbReference>
<dbReference type="VEuPathDB" id="FungiDB:CAGL0A03256g"/>
<dbReference type="eggNOG" id="KOG2379">
    <property type="taxonomic scope" value="Eukaryota"/>
</dbReference>
<dbReference type="HOGENOM" id="CLU_014329_1_0_1"/>
<dbReference type="InParanoid" id="Q6FYA6"/>
<dbReference type="OMA" id="ELGDAMW"/>
<dbReference type="Proteomes" id="UP000002428">
    <property type="component" value="Chromosome A"/>
</dbReference>
<dbReference type="GO" id="GO:0048476">
    <property type="term" value="C:Holliday junction resolvase complex"/>
    <property type="evidence" value="ECO:0007669"/>
    <property type="project" value="EnsemblFungi"/>
</dbReference>
<dbReference type="GO" id="GO:0005634">
    <property type="term" value="C:nucleus"/>
    <property type="evidence" value="ECO:0007669"/>
    <property type="project" value="UniProtKB-SubCell"/>
</dbReference>
<dbReference type="GO" id="GO:0048257">
    <property type="term" value="F:3'-flap endonuclease activity"/>
    <property type="evidence" value="ECO:0007669"/>
    <property type="project" value="TreeGrafter"/>
</dbReference>
<dbReference type="GO" id="GO:0008821">
    <property type="term" value="F:crossover junction DNA endonuclease activity"/>
    <property type="evidence" value="ECO:0007669"/>
    <property type="project" value="EnsemblFungi"/>
</dbReference>
<dbReference type="GO" id="GO:0003677">
    <property type="term" value="F:DNA binding"/>
    <property type="evidence" value="ECO:0007669"/>
    <property type="project" value="InterPro"/>
</dbReference>
<dbReference type="GO" id="GO:0004857">
    <property type="term" value="F:enzyme inhibitor activity"/>
    <property type="evidence" value="ECO:0007669"/>
    <property type="project" value="EnsemblFungi"/>
</dbReference>
<dbReference type="GO" id="GO:0046872">
    <property type="term" value="F:metal ion binding"/>
    <property type="evidence" value="ECO:0007669"/>
    <property type="project" value="UniProtKB-KW"/>
</dbReference>
<dbReference type="GO" id="GO:0006308">
    <property type="term" value="P:DNA catabolic process"/>
    <property type="evidence" value="ECO:0007669"/>
    <property type="project" value="InterPro"/>
</dbReference>
<dbReference type="GO" id="GO:0006265">
    <property type="term" value="P:DNA topological change"/>
    <property type="evidence" value="ECO:0007669"/>
    <property type="project" value="EnsemblFungi"/>
</dbReference>
<dbReference type="GO" id="GO:0000727">
    <property type="term" value="P:double-strand break repair via break-induced replication"/>
    <property type="evidence" value="ECO:0007669"/>
    <property type="project" value="EnsemblFungi"/>
</dbReference>
<dbReference type="GO" id="GO:0031573">
    <property type="term" value="P:mitotic intra-S DNA damage checkpoint signaling"/>
    <property type="evidence" value="ECO:0007669"/>
    <property type="project" value="TreeGrafter"/>
</dbReference>
<dbReference type="GO" id="GO:0000712">
    <property type="term" value="P:resolution of meiotic recombination intermediates"/>
    <property type="evidence" value="ECO:0007669"/>
    <property type="project" value="EnsemblFungi"/>
</dbReference>
<dbReference type="CDD" id="cd21036">
    <property type="entry name" value="WH_MUS81"/>
    <property type="match status" value="1"/>
</dbReference>
<dbReference type="CDD" id="cd20074">
    <property type="entry name" value="XPF_nuclease_Mus81"/>
    <property type="match status" value="1"/>
</dbReference>
<dbReference type="FunFam" id="1.10.10.10:FF:000307">
    <property type="entry name" value="Crossover junction endonuclease MUS81"/>
    <property type="match status" value="1"/>
</dbReference>
<dbReference type="FunFam" id="3.40.50.10130:FF:000011">
    <property type="entry name" value="Crossover junction endonuclease MUS81"/>
    <property type="match status" value="1"/>
</dbReference>
<dbReference type="Gene3D" id="3.40.50.10130">
    <property type="match status" value="1"/>
</dbReference>
<dbReference type="Gene3D" id="1.10.150.670">
    <property type="entry name" value="Crossover junction endonuclease EME1, DNA-binding domain"/>
    <property type="match status" value="1"/>
</dbReference>
<dbReference type="Gene3D" id="1.10.150.110">
    <property type="entry name" value="DNA polymerase beta, N-terminal domain-like"/>
    <property type="match status" value="1"/>
</dbReference>
<dbReference type="Gene3D" id="1.10.10.10">
    <property type="entry name" value="Winged helix-like DNA-binding domain superfamily/Winged helix DNA-binding domain"/>
    <property type="match status" value="1"/>
</dbReference>
<dbReference type="InterPro" id="IPR027421">
    <property type="entry name" value="DNA_pol_lamdba_lyase_dom_sf"/>
</dbReference>
<dbReference type="InterPro" id="IPR042530">
    <property type="entry name" value="EME1/EME2_C"/>
</dbReference>
<dbReference type="InterPro" id="IPR006166">
    <property type="entry name" value="ERCC4_domain"/>
</dbReference>
<dbReference type="InterPro" id="IPR008979">
    <property type="entry name" value="Galactose-bd-like_sf"/>
</dbReference>
<dbReference type="InterPro" id="IPR033309">
    <property type="entry name" value="Mus81"/>
</dbReference>
<dbReference type="InterPro" id="IPR011335">
    <property type="entry name" value="Restrct_endonuc-II-like"/>
</dbReference>
<dbReference type="InterPro" id="IPR036388">
    <property type="entry name" value="WH-like_DNA-bd_sf"/>
</dbReference>
<dbReference type="InterPro" id="IPR047417">
    <property type="entry name" value="WH_MUS81"/>
</dbReference>
<dbReference type="InterPro" id="IPR047416">
    <property type="entry name" value="XPF_nuclease_Mus81"/>
</dbReference>
<dbReference type="PANTHER" id="PTHR13451">
    <property type="entry name" value="CLASS II CROSSOVER JUNCTION ENDONUCLEASE MUS81"/>
    <property type="match status" value="1"/>
</dbReference>
<dbReference type="PANTHER" id="PTHR13451:SF0">
    <property type="entry name" value="CROSSOVER JUNCTION ENDONUCLEASE MUS81"/>
    <property type="match status" value="1"/>
</dbReference>
<dbReference type="Pfam" id="PF02732">
    <property type="entry name" value="ERCC4"/>
    <property type="match status" value="1"/>
</dbReference>
<dbReference type="Pfam" id="PF21136">
    <property type="entry name" value="MUS81-like_WH"/>
    <property type="match status" value="1"/>
</dbReference>
<dbReference type="SMART" id="SM00891">
    <property type="entry name" value="ERCC4"/>
    <property type="match status" value="1"/>
</dbReference>
<dbReference type="SUPFAM" id="SSF47802">
    <property type="entry name" value="DNA polymerase beta, N-terminal domain-like"/>
    <property type="match status" value="1"/>
</dbReference>
<dbReference type="SUPFAM" id="SSF49785">
    <property type="entry name" value="Galactose-binding domain-like"/>
    <property type="match status" value="1"/>
</dbReference>
<dbReference type="SUPFAM" id="SSF52980">
    <property type="entry name" value="Restriction endonuclease-like"/>
    <property type="match status" value="1"/>
</dbReference>
<accession>Q6FYA6</accession>